<accession>P0AG12</accession>
<accession>P04153</accession>
<protein>
    <recommendedName>
        <fullName>Protein UmuD</fullName>
        <ecNumber>3.4.21.-</ecNumber>
    </recommendedName>
    <component>
        <recommendedName>
            <fullName>Protein UmuD'</fullName>
        </recommendedName>
    </component>
</protein>
<evidence type="ECO:0000250" key="1"/>
<evidence type="ECO:0000305" key="2"/>
<name>UMUD_ECO57</name>
<keyword id="KW-0068">Autocatalytic cleavage</keyword>
<keyword id="KW-0227">DNA damage</keyword>
<keyword id="KW-0234">DNA repair</keyword>
<keyword id="KW-0378">Hydrolase</keyword>
<keyword id="KW-0645">Protease</keyword>
<keyword id="KW-1185">Reference proteome</keyword>
<keyword id="KW-0720">Serine protease</keyword>
<keyword id="KW-0741">SOS mutagenesis</keyword>
<keyword id="KW-0742">SOS response</keyword>
<dbReference type="EC" id="3.4.21.-"/>
<dbReference type="EMBL" id="AE005174">
    <property type="protein sequence ID" value="AAG56034.1"/>
    <property type="molecule type" value="Genomic_DNA"/>
</dbReference>
<dbReference type="EMBL" id="BA000007">
    <property type="protein sequence ID" value="BAB35101.1"/>
    <property type="molecule type" value="Genomic_DNA"/>
</dbReference>
<dbReference type="PIR" id="F85696">
    <property type="entry name" value="F85696"/>
</dbReference>
<dbReference type="PIR" id="F90838">
    <property type="entry name" value="F90838"/>
</dbReference>
<dbReference type="RefSeq" id="NP_309705.1">
    <property type="nucleotide sequence ID" value="NC_002695.1"/>
</dbReference>
<dbReference type="RefSeq" id="WP_000897378.1">
    <property type="nucleotide sequence ID" value="NZ_VOAI01000042.1"/>
</dbReference>
<dbReference type="BMRB" id="P0AG12"/>
<dbReference type="SMR" id="P0AG12"/>
<dbReference type="STRING" id="155864.Z1946"/>
<dbReference type="MEROPS" id="S24.003"/>
<dbReference type="GeneID" id="913194"/>
<dbReference type="KEGG" id="ece:Z1946"/>
<dbReference type="KEGG" id="ecs:ECs_1678"/>
<dbReference type="PATRIC" id="fig|386585.9.peg.1775"/>
<dbReference type="eggNOG" id="COG1974">
    <property type="taxonomic scope" value="Bacteria"/>
</dbReference>
<dbReference type="HOGENOM" id="CLU_066192_0_0_6"/>
<dbReference type="OMA" id="VQIWGVA"/>
<dbReference type="Proteomes" id="UP000000558">
    <property type="component" value="Chromosome"/>
</dbReference>
<dbReference type="Proteomes" id="UP000002519">
    <property type="component" value="Chromosome"/>
</dbReference>
<dbReference type="GO" id="GO:0003677">
    <property type="term" value="F:DNA binding"/>
    <property type="evidence" value="ECO:0007669"/>
    <property type="project" value="InterPro"/>
</dbReference>
<dbReference type="GO" id="GO:0008236">
    <property type="term" value="F:serine-type peptidase activity"/>
    <property type="evidence" value="ECO:0007669"/>
    <property type="project" value="UniProtKB-KW"/>
</dbReference>
<dbReference type="GO" id="GO:0006281">
    <property type="term" value="P:DNA repair"/>
    <property type="evidence" value="ECO:0007669"/>
    <property type="project" value="UniProtKB-KW"/>
</dbReference>
<dbReference type="GO" id="GO:0006508">
    <property type="term" value="P:proteolysis"/>
    <property type="evidence" value="ECO:0007669"/>
    <property type="project" value="UniProtKB-KW"/>
</dbReference>
<dbReference type="GO" id="GO:0006355">
    <property type="term" value="P:regulation of DNA-templated transcription"/>
    <property type="evidence" value="ECO:0007669"/>
    <property type="project" value="InterPro"/>
</dbReference>
<dbReference type="GO" id="GO:0009432">
    <property type="term" value="P:SOS response"/>
    <property type="evidence" value="ECO:0007669"/>
    <property type="project" value="UniProtKB-KW"/>
</dbReference>
<dbReference type="CDD" id="cd06529">
    <property type="entry name" value="S24_LexA-like"/>
    <property type="match status" value="1"/>
</dbReference>
<dbReference type="Gene3D" id="2.10.109.10">
    <property type="entry name" value="Umud Fragment, subunit A"/>
    <property type="match status" value="1"/>
</dbReference>
<dbReference type="InterPro" id="IPR039418">
    <property type="entry name" value="LexA-like"/>
</dbReference>
<dbReference type="InterPro" id="IPR036286">
    <property type="entry name" value="LexA/Signal_pep-like_sf"/>
</dbReference>
<dbReference type="InterPro" id="IPR050077">
    <property type="entry name" value="LexA_repressor"/>
</dbReference>
<dbReference type="InterPro" id="IPR006197">
    <property type="entry name" value="Peptidase_S24_LexA"/>
</dbReference>
<dbReference type="InterPro" id="IPR015927">
    <property type="entry name" value="Peptidase_S24_S26A/B/C"/>
</dbReference>
<dbReference type="NCBIfam" id="NF007621">
    <property type="entry name" value="PRK10276.1"/>
    <property type="match status" value="1"/>
</dbReference>
<dbReference type="PANTHER" id="PTHR33516">
    <property type="entry name" value="LEXA REPRESSOR"/>
    <property type="match status" value="1"/>
</dbReference>
<dbReference type="PANTHER" id="PTHR33516:SF2">
    <property type="entry name" value="LEXA REPRESSOR-RELATED"/>
    <property type="match status" value="1"/>
</dbReference>
<dbReference type="Pfam" id="PF00717">
    <property type="entry name" value="Peptidase_S24"/>
    <property type="match status" value="1"/>
</dbReference>
<dbReference type="PRINTS" id="PR00726">
    <property type="entry name" value="LEXASERPTASE"/>
</dbReference>
<dbReference type="SUPFAM" id="SSF51306">
    <property type="entry name" value="LexA/Signal peptidase"/>
    <property type="match status" value="1"/>
</dbReference>
<proteinExistence type="inferred from homology"/>
<gene>
    <name type="primary">umuD</name>
    <name type="ordered locus">Z1946</name>
    <name type="ordered locus">ECs1678</name>
</gene>
<organism>
    <name type="scientific">Escherichia coli O157:H7</name>
    <dbReference type="NCBI Taxonomy" id="83334"/>
    <lineage>
        <taxon>Bacteria</taxon>
        <taxon>Pseudomonadati</taxon>
        <taxon>Pseudomonadota</taxon>
        <taxon>Gammaproteobacteria</taxon>
        <taxon>Enterobacterales</taxon>
        <taxon>Enterobacteriaceae</taxon>
        <taxon>Escherichia</taxon>
    </lineage>
</organism>
<feature type="chain" id="PRO_0000045244" description="Protein UmuD">
    <location>
        <begin position="1"/>
        <end position="139"/>
    </location>
</feature>
<feature type="chain" id="PRO_0000045246" description="Protein UmuD'">
    <location>
        <begin position="25"/>
        <end position="139"/>
    </location>
</feature>
<feature type="active site" description="For autocatalytic cleavage activity" evidence="1">
    <location>
        <position position="60"/>
    </location>
</feature>
<feature type="active site" description="For autocatalytic cleavage activity" evidence="1">
    <location>
        <position position="97"/>
    </location>
</feature>
<feature type="site" description="Cleavage; by autolysis" evidence="1">
    <location>
        <begin position="24"/>
        <end position="25"/>
    </location>
</feature>
<comment type="function">
    <text evidence="1">Involved in UV protection and mutation. Essential for induced (or SOS) mutagenesis. May modify the DNA replication machinery to allow bypass synthesis across a damaged template (By similarity).</text>
</comment>
<comment type="similarity">
    <text evidence="2">Belongs to the peptidase S24 family.</text>
</comment>
<reference key="1">
    <citation type="journal article" date="2001" name="Nature">
        <title>Genome sequence of enterohaemorrhagic Escherichia coli O157:H7.</title>
        <authorList>
            <person name="Perna N.T."/>
            <person name="Plunkett G. III"/>
            <person name="Burland V."/>
            <person name="Mau B."/>
            <person name="Glasner J.D."/>
            <person name="Rose D.J."/>
            <person name="Mayhew G.F."/>
            <person name="Evans P.S."/>
            <person name="Gregor J."/>
            <person name="Kirkpatrick H.A."/>
            <person name="Posfai G."/>
            <person name="Hackett J."/>
            <person name="Klink S."/>
            <person name="Boutin A."/>
            <person name="Shao Y."/>
            <person name="Miller L."/>
            <person name="Grotbeck E.J."/>
            <person name="Davis N.W."/>
            <person name="Lim A."/>
            <person name="Dimalanta E.T."/>
            <person name="Potamousis K."/>
            <person name="Apodaca J."/>
            <person name="Anantharaman T.S."/>
            <person name="Lin J."/>
            <person name="Yen G."/>
            <person name="Schwartz D.C."/>
            <person name="Welch R.A."/>
            <person name="Blattner F.R."/>
        </authorList>
    </citation>
    <scope>NUCLEOTIDE SEQUENCE [LARGE SCALE GENOMIC DNA]</scope>
    <source>
        <strain>O157:H7 / EDL933 / ATCC 700927 / EHEC</strain>
    </source>
</reference>
<reference key="2">
    <citation type="journal article" date="2001" name="DNA Res.">
        <title>Complete genome sequence of enterohemorrhagic Escherichia coli O157:H7 and genomic comparison with a laboratory strain K-12.</title>
        <authorList>
            <person name="Hayashi T."/>
            <person name="Makino K."/>
            <person name="Ohnishi M."/>
            <person name="Kurokawa K."/>
            <person name="Ishii K."/>
            <person name="Yokoyama K."/>
            <person name="Han C.-G."/>
            <person name="Ohtsubo E."/>
            <person name="Nakayama K."/>
            <person name="Murata T."/>
            <person name="Tanaka M."/>
            <person name="Tobe T."/>
            <person name="Iida T."/>
            <person name="Takami H."/>
            <person name="Honda T."/>
            <person name="Sasakawa C."/>
            <person name="Ogasawara N."/>
            <person name="Yasunaga T."/>
            <person name="Kuhara S."/>
            <person name="Shiba T."/>
            <person name="Hattori M."/>
            <person name="Shinagawa H."/>
        </authorList>
    </citation>
    <scope>NUCLEOTIDE SEQUENCE [LARGE SCALE GENOMIC DNA]</scope>
    <source>
        <strain>O157:H7 / Sakai / RIMD 0509952 / EHEC</strain>
    </source>
</reference>
<sequence>MLFIKPADLREIVTFPLFSDLVQCGFPSPAADYVEQRIDLNQLLIQHPSATYFVKASGDSMIDGGISDGDLLIVDSAITASHGDIVIAAVDGEFTVKKLQLRPTVQLIPMNSAYSPITISSEDTLDVFGVVIHVVKAMR</sequence>